<reference key="1">
    <citation type="journal article" date="2001" name="Nature">
        <title>Genome sequence of Yersinia pestis, the causative agent of plague.</title>
        <authorList>
            <person name="Parkhill J."/>
            <person name="Wren B.W."/>
            <person name="Thomson N.R."/>
            <person name="Titball R.W."/>
            <person name="Holden M.T.G."/>
            <person name="Prentice M.B."/>
            <person name="Sebaihia M."/>
            <person name="James K.D."/>
            <person name="Churcher C.M."/>
            <person name="Mungall K.L."/>
            <person name="Baker S."/>
            <person name="Basham D."/>
            <person name="Bentley S.D."/>
            <person name="Brooks K."/>
            <person name="Cerdeno-Tarraga A.-M."/>
            <person name="Chillingworth T."/>
            <person name="Cronin A."/>
            <person name="Davies R.M."/>
            <person name="Davis P."/>
            <person name="Dougan G."/>
            <person name="Feltwell T."/>
            <person name="Hamlin N."/>
            <person name="Holroyd S."/>
            <person name="Jagels K."/>
            <person name="Karlyshev A.V."/>
            <person name="Leather S."/>
            <person name="Moule S."/>
            <person name="Oyston P.C.F."/>
            <person name="Quail M.A."/>
            <person name="Rutherford K.M."/>
            <person name="Simmonds M."/>
            <person name="Skelton J."/>
            <person name="Stevens K."/>
            <person name="Whitehead S."/>
            <person name="Barrell B.G."/>
        </authorList>
    </citation>
    <scope>NUCLEOTIDE SEQUENCE [LARGE SCALE GENOMIC DNA]</scope>
    <source>
        <strain>CO-92 / Biovar Orientalis</strain>
    </source>
</reference>
<reference key="2">
    <citation type="journal article" date="2002" name="J. Bacteriol.">
        <title>Genome sequence of Yersinia pestis KIM.</title>
        <authorList>
            <person name="Deng W."/>
            <person name="Burland V."/>
            <person name="Plunkett G. III"/>
            <person name="Boutin A."/>
            <person name="Mayhew G.F."/>
            <person name="Liss P."/>
            <person name="Perna N.T."/>
            <person name="Rose D.J."/>
            <person name="Mau B."/>
            <person name="Zhou S."/>
            <person name="Schwartz D.C."/>
            <person name="Fetherston J.D."/>
            <person name="Lindler L.E."/>
            <person name="Brubaker R.R."/>
            <person name="Plano G.V."/>
            <person name="Straley S.C."/>
            <person name="McDonough K.A."/>
            <person name="Nilles M.L."/>
            <person name="Matson J.S."/>
            <person name="Blattner F.R."/>
            <person name="Perry R.D."/>
        </authorList>
    </citation>
    <scope>NUCLEOTIDE SEQUENCE [LARGE SCALE GENOMIC DNA]</scope>
    <source>
        <strain>KIM10+ / Biovar Mediaevalis</strain>
    </source>
</reference>
<reference key="3">
    <citation type="journal article" date="2004" name="DNA Res.">
        <title>Complete genome sequence of Yersinia pestis strain 91001, an isolate avirulent to humans.</title>
        <authorList>
            <person name="Song Y."/>
            <person name="Tong Z."/>
            <person name="Wang J."/>
            <person name="Wang L."/>
            <person name="Guo Z."/>
            <person name="Han Y."/>
            <person name="Zhang J."/>
            <person name="Pei D."/>
            <person name="Zhou D."/>
            <person name="Qin H."/>
            <person name="Pang X."/>
            <person name="Han Y."/>
            <person name="Zhai J."/>
            <person name="Li M."/>
            <person name="Cui B."/>
            <person name="Qi Z."/>
            <person name="Jin L."/>
            <person name="Dai R."/>
            <person name="Chen F."/>
            <person name="Li S."/>
            <person name="Ye C."/>
            <person name="Du Z."/>
            <person name="Lin W."/>
            <person name="Wang J."/>
            <person name="Yu J."/>
            <person name="Yang H."/>
            <person name="Wang J."/>
            <person name="Huang P."/>
            <person name="Yang R."/>
        </authorList>
    </citation>
    <scope>NUCLEOTIDE SEQUENCE [LARGE SCALE GENOMIC DNA]</scope>
    <source>
        <strain>91001 / Biovar Mediaevalis</strain>
    </source>
</reference>
<protein>
    <recommendedName>
        <fullName evidence="1">Ribosomal RNA small subunit methyltransferase A</fullName>
        <ecNumber evidence="1">2.1.1.182</ecNumber>
    </recommendedName>
    <alternativeName>
        <fullName evidence="1">16S rRNA (adenine(1518)-N(6)/adenine(1519)-N(6))-dimethyltransferase</fullName>
    </alternativeName>
    <alternativeName>
        <fullName evidence="1">16S rRNA dimethyladenosine transferase</fullName>
    </alternativeName>
    <alternativeName>
        <fullName evidence="1">16S rRNA dimethylase</fullName>
    </alternativeName>
    <alternativeName>
        <fullName evidence="1">S-adenosylmethionine-6-N', N'-adenosyl(rRNA) dimethyltransferase</fullName>
    </alternativeName>
</protein>
<organism>
    <name type="scientific">Yersinia pestis</name>
    <dbReference type="NCBI Taxonomy" id="632"/>
    <lineage>
        <taxon>Bacteria</taxon>
        <taxon>Pseudomonadati</taxon>
        <taxon>Pseudomonadota</taxon>
        <taxon>Gammaproteobacteria</taxon>
        <taxon>Enterobacterales</taxon>
        <taxon>Yersiniaceae</taxon>
        <taxon>Yersinia</taxon>
    </lineage>
</organism>
<evidence type="ECO:0000255" key="1">
    <source>
        <dbReference type="HAMAP-Rule" id="MF_00607"/>
    </source>
</evidence>
<feature type="chain" id="PRO_0000101648" description="Ribosomal RNA small subunit methyltransferase A">
    <location>
        <begin position="1"/>
        <end position="272"/>
    </location>
</feature>
<feature type="binding site" evidence="1">
    <location>
        <position position="18"/>
    </location>
    <ligand>
        <name>S-adenosyl-L-methionine</name>
        <dbReference type="ChEBI" id="CHEBI:59789"/>
    </ligand>
</feature>
<feature type="binding site" evidence="1">
    <location>
        <position position="20"/>
    </location>
    <ligand>
        <name>S-adenosyl-L-methionine</name>
        <dbReference type="ChEBI" id="CHEBI:59789"/>
    </ligand>
</feature>
<feature type="binding site" evidence="1">
    <location>
        <position position="45"/>
    </location>
    <ligand>
        <name>S-adenosyl-L-methionine</name>
        <dbReference type="ChEBI" id="CHEBI:59789"/>
    </ligand>
</feature>
<feature type="binding site" evidence="1">
    <location>
        <position position="66"/>
    </location>
    <ligand>
        <name>S-adenosyl-L-methionine</name>
        <dbReference type="ChEBI" id="CHEBI:59789"/>
    </ligand>
</feature>
<feature type="binding site" evidence="1">
    <location>
        <position position="91"/>
    </location>
    <ligand>
        <name>S-adenosyl-L-methionine</name>
        <dbReference type="ChEBI" id="CHEBI:59789"/>
    </ligand>
</feature>
<feature type="binding site" evidence="1">
    <location>
        <position position="113"/>
    </location>
    <ligand>
        <name>S-adenosyl-L-methionine</name>
        <dbReference type="ChEBI" id="CHEBI:59789"/>
    </ligand>
</feature>
<dbReference type="EC" id="2.1.1.182" evidence="1"/>
<dbReference type="EMBL" id="AL590842">
    <property type="protein sequence ID" value="CAL19172.1"/>
    <property type="molecule type" value="Genomic_DNA"/>
</dbReference>
<dbReference type="EMBL" id="AE009952">
    <property type="protein sequence ID" value="AAM87231.1"/>
    <property type="molecule type" value="Genomic_DNA"/>
</dbReference>
<dbReference type="EMBL" id="AE017042">
    <property type="protein sequence ID" value="AAS63835.1"/>
    <property type="molecule type" value="Genomic_DNA"/>
</dbReference>
<dbReference type="PIR" id="AB0061">
    <property type="entry name" value="AB0061"/>
</dbReference>
<dbReference type="RefSeq" id="WP_002210490.1">
    <property type="nucleotide sequence ID" value="NZ_WUCM01000024.1"/>
</dbReference>
<dbReference type="RefSeq" id="YP_002345565.1">
    <property type="nucleotide sequence ID" value="NC_003143.1"/>
</dbReference>
<dbReference type="SMR" id="Q8ZIK5"/>
<dbReference type="STRING" id="214092.YPO0492"/>
<dbReference type="PaxDb" id="214092-YPO0492"/>
<dbReference type="DNASU" id="1148630"/>
<dbReference type="EnsemblBacteria" id="AAS63835">
    <property type="protein sequence ID" value="AAS63835"/>
    <property type="gene ID" value="YP_3687"/>
</dbReference>
<dbReference type="GeneID" id="57974118"/>
<dbReference type="KEGG" id="ype:YPO0492"/>
<dbReference type="KEGG" id="ypk:y3683"/>
<dbReference type="KEGG" id="ypm:YP_3687"/>
<dbReference type="PATRIC" id="fig|214092.21.peg.742"/>
<dbReference type="eggNOG" id="COG0030">
    <property type="taxonomic scope" value="Bacteria"/>
</dbReference>
<dbReference type="HOGENOM" id="CLU_041220_0_1_6"/>
<dbReference type="OMA" id="GMFQKEV"/>
<dbReference type="OrthoDB" id="9814755at2"/>
<dbReference type="Proteomes" id="UP000000815">
    <property type="component" value="Chromosome"/>
</dbReference>
<dbReference type="Proteomes" id="UP000001019">
    <property type="component" value="Chromosome"/>
</dbReference>
<dbReference type="Proteomes" id="UP000002490">
    <property type="component" value="Chromosome"/>
</dbReference>
<dbReference type="GO" id="GO:0005829">
    <property type="term" value="C:cytosol"/>
    <property type="evidence" value="ECO:0000318"/>
    <property type="project" value="GO_Central"/>
</dbReference>
<dbReference type="GO" id="GO:0052908">
    <property type="term" value="F:16S rRNA (adenine(1518)-N(6)/adenine(1519)-N(6))-dimethyltransferase activity"/>
    <property type="evidence" value="ECO:0007669"/>
    <property type="project" value="UniProtKB-EC"/>
</dbReference>
<dbReference type="GO" id="GO:0003723">
    <property type="term" value="F:RNA binding"/>
    <property type="evidence" value="ECO:0007669"/>
    <property type="project" value="UniProtKB-KW"/>
</dbReference>
<dbReference type="GO" id="GO:0000179">
    <property type="term" value="F:rRNA (adenine-N6,N6-)-dimethyltransferase activity"/>
    <property type="evidence" value="ECO:0000318"/>
    <property type="project" value="GO_Central"/>
</dbReference>
<dbReference type="GO" id="GO:0031167">
    <property type="term" value="P:rRNA methylation"/>
    <property type="evidence" value="ECO:0000318"/>
    <property type="project" value="GO_Central"/>
</dbReference>
<dbReference type="CDD" id="cd02440">
    <property type="entry name" value="AdoMet_MTases"/>
    <property type="match status" value="1"/>
</dbReference>
<dbReference type="FunFam" id="1.10.8.100:FF:000001">
    <property type="entry name" value="Ribosomal RNA small subunit methyltransferase A"/>
    <property type="match status" value="1"/>
</dbReference>
<dbReference type="FunFam" id="3.40.50.150:FF:000006">
    <property type="entry name" value="Ribosomal RNA small subunit methyltransferase A"/>
    <property type="match status" value="1"/>
</dbReference>
<dbReference type="Gene3D" id="1.10.8.100">
    <property type="entry name" value="Ribosomal RNA adenine dimethylase-like, domain 2"/>
    <property type="match status" value="1"/>
</dbReference>
<dbReference type="Gene3D" id="3.40.50.150">
    <property type="entry name" value="Vaccinia Virus protein VP39"/>
    <property type="match status" value="1"/>
</dbReference>
<dbReference type="HAMAP" id="MF_00607">
    <property type="entry name" value="16SrRNA_methyltr_A"/>
    <property type="match status" value="1"/>
</dbReference>
<dbReference type="InterPro" id="IPR001737">
    <property type="entry name" value="KsgA/Erm"/>
</dbReference>
<dbReference type="InterPro" id="IPR023165">
    <property type="entry name" value="rRNA_Ade_diMease-like_C"/>
</dbReference>
<dbReference type="InterPro" id="IPR020596">
    <property type="entry name" value="rRNA_Ade_Mease_Trfase_CS"/>
</dbReference>
<dbReference type="InterPro" id="IPR020598">
    <property type="entry name" value="rRNA_Ade_methylase_Trfase_N"/>
</dbReference>
<dbReference type="InterPro" id="IPR011530">
    <property type="entry name" value="rRNA_adenine_dimethylase"/>
</dbReference>
<dbReference type="InterPro" id="IPR029063">
    <property type="entry name" value="SAM-dependent_MTases_sf"/>
</dbReference>
<dbReference type="NCBIfam" id="TIGR00755">
    <property type="entry name" value="ksgA"/>
    <property type="match status" value="1"/>
</dbReference>
<dbReference type="PANTHER" id="PTHR11727">
    <property type="entry name" value="DIMETHYLADENOSINE TRANSFERASE"/>
    <property type="match status" value="1"/>
</dbReference>
<dbReference type="PANTHER" id="PTHR11727:SF7">
    <property type="entry name" value="DIMETHYLADENOSINE TRANSFERASE-RELATED"/>
    <property type="match status" value="1"/>
</dbReference>
<dbReference type="Pfam" id="PF00398">
    <property type="entry name" value="RrnaAD"/>
    <property type="match status" value="1"/>
</dbReference>
<dbReference type="SMART" id="SM00650">
    <property type="entry name" value="rADc"/>
    <property type="match status" value="1"/>
</dbReference>
<dbReference type="SUPFAM" id="SSF53335">
    <property type="entry name" value="S-adenosyl-L-methionine-dependent methyltransferases"/>
    <property type="match status" value="1"/>
</dbReference>
<dbReference type="PROSITE" id="PS01131">
    <property type="entry name" value="RRNA_A_DIMETH"/>
    <property type="match status" value="1"/>
</dbReference>
<dbReference type="PROSITE" id="PS51689">
    <property type="entry name" value="SAM_RNA_A_N6_MT"/>
    <property type="match status" value="1"/>
</dbReference>
<keyword id="KW-0963">Cytoplasm</keyword>
<keyword id="KW-0489">Methyltransferase</keyword>
<keyword id="KW-1185">Reference proteome</keyword>
<keyword id="KW-0694">RNA-binding</keyword>
<keyword id="KW-0698">rRNA processing</keyword>
<keyword id="KW-0949">S-adenosyl-L-methionine</keyword>
<keyword id="KW-0808">Transferase</keyword>
<comment type="function">
    <text evidence="1">Specifically dimethylates two adjacent adenosines (A1518 and A1519) in the loop of a conserved hairpin near the 3'-end of 16S rRNA in the 30S particle. May play a critical role in biogenesis of 30S subunits.</text>
</comment>
<comment type="catalytic activity">
    <reaction evidence="1">
        <text>adenosine(1518)/adenosine(1519) in 16S rRNA + 4 S-adenosyl-L-methionine = N(6)-dimethyladenosine(1518)/N(6)-dimethyladenosine(1519) in 16S rRNA + 4 S-adenosyl-L-homocysteine + 4 H(+)</text>
        <dbReference type="Rhea" id="RHEA:19609"/>
        <dbReference type="Rhea" id="RHEA-COMP:10232"/>
        <dbReference type="Rhea" id="RHEA-COMP:10233"/>
        <dbReference type="ChEBI" id="CHEBI:15378"/>
        <dbReference type="ChEBI" id="CHEBI:57856"/>
        <dbReference type="ChEBI" id="CHEBI:59789"/>
        <dbReference type="ChEBI" id="CHEBI:74411"/>
        <dbReference type="ChEBI" id="CHEBI:74493"/>
        <dbReference type="EC" id="2.1.1.182"/>
    </reaction>
</comment>
<comment type="subcellular location">
    <subcellularLocation>
        <location evidence="1">Cytoplasm</location>
    </subcellularLocation>
</comment>
<comment type="similarity">
    <text evidence="1">Belongs to the class I-like SAM-binding methyltransferase superfamily. rRNA adenine N(6)-methyltransferase family. RsmA subfamily.</text>
</comment>
<gene>
    <name evidence="1" type="primary">rsmA</name>
    <name evidence="1" type="synonym">ksgA</name>
    <name type="ordered locus">YPO0492</name>
    <name type="ordered locus">y3683</name>
    <name type="ordered locus">YP_3687</name>
</gene>
<accession>Q8ZIK5</accession>
<accession>Q0WJH3</accession>
<name>RSMA_YERPE</name>
<proteinExistence type="inferred from homology"/>
<sequence>MNNRVHQGHFARKRFGQNFLNDQFVIDSIVSAIHPVPGEAVVEIGPGLGALTEPVAARMDHMTVIELDRDLAARLASHPQLKDKLTIHQQDAMKVNFSELSEQAGQPLRVFGNLPYNISTPLMFHLFSYTDAIRDMHFMLQKEVVNRLVAGPNSKTYGRLTVMAQYYCNVIPVLEVPPTAFTPAPKVDSAVVRLIPHVQMPHPVGDVRMLSRITTQAFNQRRKTVRNSLGDLFTSEQLIELGIDPILRAENISVAQYCKLANWLSAQSTPQK</sequence>